<evidence type="ECO:0000255" key="1">
    <source>
        <dbReference type="HAMAP-Rule" id="MF_00148"/>
    </source>
</evidence>
<protein>
    <recommendedName>
        <fullName evidence="1">Uracil-DNA glycosylase</fullName>
        <shortName evidence="1">UDG</shortName>
        <ecNumber evidence="1">3.2.2.27</ecNumber>
    </recommendedName>
</protein>
<feature type="chain" id="PRO_0000176078" description="Uracil-DNA glycosylase">
    <location>
        <begin position="1"/>
        <end position="231"/>
    </location>
</feature>
<feature type="active site" description="Proton acceptor" evidence="1">
    <location>
        <position position="74"/>
    </location>
</feature>
<proteinExistence type="inferred from homology"/>
<organism>
    <name type="scientific">Campylobacter jejuni (strain RM1221)</name>
    <dbReference type="NCBI Taxonomy" id="195099"/>
    <lineage>
        <taxon>Bacteria</taxon>
        <taxon>Pseudomonadati</taxon>
        <taxon>Campylobacterota</taxon>
        <taxon>Epsilonproteobacteria</taxon>
        <taxon>Campylobacterales</taxon>
        <taxon>Campylobacteraceae</taxon>
        <taxon>Campylobacter</taxon>
    </lineage>
</organism>
<comment type="function">
    <text evidence="1">Excises uracil residues from the DNA which can arise as a result of misincorporation of dUMP residues by DNA polymerase or due to deamination of cytosine.</text>
</comment>
<comment type="catalytic activity">
    <reaction evidence="1">
        <text>Hydrolyzes single-stranded DNA or mismatched double-stranded DNA and polynucleotides, releasing free uracil.</text>
        <dbReference type="EC" id="3.2.2.27"/>
    </reaction>
</comment>
<comment type="subcellular location">
    <subcellularLocation>
        <location evidence="1">Cytoplasm</location>
    </subcellularLocation>
</comment>
<comment type="similarity">
    <text evidence="1">Belongs to the uracil-DNA glycosylase (UDG) superfamily. UNG family.</text>
</comment>
<keyword id="KW-0963">Cytoplasm</keyword>
<keyword id="KW-0227">DNA damage</keyword>
<keyword id="KW-0234">DNA repair</keyword>
<keyword id="KW-0378">Hydrolase</keyword>
<accession>Q5HX80</accession>
<sequence>MEEITINIDKIKINDDWKEFLRDEFQKKYFLEIKKQYLNAINQNIVIYPPANLIFNAFNLCPLKEIKIIILGQDPYHQPNQAMGLSFSVPKNVKIPPSLNNIFKELQNDLNITPAKSGDLSSWAKQGVLLLNSILSVEANKAASHSSWGWQEFSDAIIHKLSNEKSGLVFMLWGNYAKNKEILIDNTKHLILKAAHPSPLARTGFLGCKHFSKANEFLKKVGKIPIDWKIV</sequence>
<gene>
    <name evidence="1" type="primary">ung</name>
    <name type="ordered locus">CJE0081</name>
</gene>
<name>UNG_CAMJR</name>
<reference key="1">
    <citation type="journal article" date="2005" name="PLoS Biol.">
        <title>Major structural differences and novel potential virulence mechanisms from the genomes of multiple Campylobacter species.</title>
        <authorList>
            <person name="Fouts D.E."/>
            <person name="Mongodin E.F."/>
            <person name="Mandrell R.E."/>
            <person name="Miller W.G."/>
            <person name="Rasko D.A."/>
            <person name="Ravel J."/>
            <person name="Brinkac L.M."/>
            <person name="DeBoy R.T."/>
            <person name="Parker C.T."/>
            <person name="Daugherty S.C."/>
            <person name="Dodson R.J."/>
            <person name="Durkin A.S."/>
            <person name="Madupu R."/>
            <person name="Sullivan S.A."/>
            <person name="Shetty J.U."/>
            <person name="Ayodeji M.A."/>
            <person name="Shvartsbeyn A."/>
            <person name="Schatz M.C."/>
            <person name="Badger J.H."/>
            <person name="Fraser C.M."/>
            <person name="Nelson K.E."/>
        </authorList>
    </citation>
    <scope>NUCLEOTIDE SEQUENCE [LARGE SCALE GENOMIC DNA]</scope>
    <source>
        <strain>RM1221</strain>
    </source>
</reference>
<dbReference type="EC" id="3.2.2.27" evidence="1"/>
<dbReference type="EMBL" id="CP000025">
    <property type="protein sequence ID" value="AAW34676.1"/>
    <property type="molecule type" value="Genomic_DNA"/>
</dbReference>
<dbReference type="RefSeq" id="WP_002859767.1">
    <property type="nucleotide sequence ID" value="NC_003912.7"/>
</dbReference>
<dbReference type="SMR" id="Q5HX80"/>
<dbReference type="KEGG" id="cjr:CJE0081"/>
<dbReference type="HOGENOM" id="CLU_032162_1_1_7"/>
<dbReference type="GO" id="GO:0005737">
    <property type="term" value="C:cytoplasm"/>
    <property type="evidence" value="ECO:0007669"/>
    <property type="project" value="UniProtKB-SubCell"/>
</dbReference>
<dbReference type="GO" id="GO:0004844">
    <property type="term" value="F:uracil DNA N-glycosylase activity"/>
    <property type="evidence" value="ECO:0007669"/>
    <property type="project" value="UniProtKB-UniRule"/>
</dbReference>
<dbReference type="GO" id="GO:0097510">
    <property type="term" value="P:base-excision repair, AP site formation via deaminated base removal"/>
    <property type="evidence" value="ECO:0007669"/>
    <property type="project" value="TreeGrafter"/>
</dbReference>
<dbReference type="CDD" id="cd10027">
    <property type="entry name" value="UDG-F1-like"/>
    <property type="match status" value="1"/>
</dbReference>
<dbReference type="FunFam" id="3.40.470.10:FF:000001">
    <property type="entry name" value="Uracil-DNA glycosylase"/>
    <property type="match status" value="1"/>
</dbReference>
<dbReference type="Gene3D" id="3.40.470.10">
    <property type="entry name" value="Uracil-DNA glycosylase-like domain"/>
    <property type="match status" value="1"/>
</dbReference>
<dbReference type="HAMAP" id="MF_00148">
    <property type="entry name" value="UDG"/>
    <property type="match status" value="1"/>
</dbReference>
<dbReference type="InterPro" id="IPR002043">
    <property type="entry name" value="UDG_fam1"/>
</dbReference>
<dbReference type="InterPro" id="IPR018085">
    <property type="entry name" value="Ura-DNA_Glyclase_AS"/>
</dbReference>
<dbReference type="InterPro" id="IPR005122">
    <property type="entry name" value="Uracil-DNA_glycosylase-like"/>
</dbReference>
<dbReference type="InterPro" id="IPR036895">
    <property type="entry name" value="Uracil-DNA_glycosylase-like_sf"/>
</dbReference>
<dbReference type="NCBIfam" id="NF003588">
    <property type="entry name" value="PRK05254.1-1"/>
    <property type="match status" value="1"/>
</dbReference>
<dbReference type="NCBIfam" id="NF003589">
    <property type="entry name" value="PRK05254.1-2"/>
    <property type="match status" value="1"/>
</dbReference>
<dbReference type="NCBIfam" id="NF003591">
    <property type="entry name" value="PRK05254.1-4"/>
    <property type="match status" value="1"/>
</dbReference>
<dbReference type="NCBIfam" id="NF003592">
    <property type="entry name" value="PRK05254.1-5"/>
    <property type="match status" value="1"/>
</dbReference>
<dbReference type="NCBIfam" id="TIGR00628">
    <property type="entry name" value="ung"/>
    <property type="match status" value="1"/>
</dbReference>
<dbReference type="PANTHER" id="PTHR11264">
    <property type="entry name" value="URACIL-DNA GLYCOSYLASE"/>
    <property type="match status" value="1"/>
</dbReference>
<dbReference type="PANTHER" id="PTHR11264:SF0">
    <property type="entry name" value="URACIL-DNA GLYCOSYLASE"/>
    <property type="match status" value="1"/>
</dbReference>
<dbReference type="Pfam" id="PF03167">
    <property type="entry name" value="UDG"/>
    <property type="match status" value="1"/>
</dbReference>
<dbReference type="SMART" id="SM00986">
    <property type="entry name" value="UDG"/>
    <property type="match status" value="1"/>
</dbReference>
<dbReference type="SMART" id="SM00987">
    <property type="entry name" value="UreE_C"/>
    <property type="match status" value="1"/>
</dbReference>
<dbReference type="SUPFAM" id="SSF52141">
    <property type="entry name" value="Uracil-DNA glycosylase-like"/>
    <property type="match status" value="1"/>
</dbReference>
<dbReference type="PROSITE" id="PS00130">
    <property type="entry name" value="U_DNA_GLYCOSYLASE"/>
    <property type="match status" value="1"/>
</dbReference>